<protein>
    <recommendedName>
        <fullName>Protein RER1</fullName>
    </recommendedName>
    <alternativeName>
        <fullName>Retention of ER proteins 1</fullName>
    </alternativeName>
</protein>
<accession>P25560</accession>
<accession>D6VR09</accession>
<proteinExistence type="evidence at protein level"/>
<evidence type="ECO:0000255" key="1"/>
<evidence type="ECO:0000269" key="2">
    <source>
    </source>
</evidence>
<evidence type="ECO:0000269" key="3">
    <source>
    </source>
</evidence>
<evidence type="ECO:0000305" key="4"/>
<organism>
    <name type="scientific">Saccharomyces cerevisiae (strain ATCC 204508 / S288c)</name>
    <name type="common">Baker's yeast</name>
    <dbReference type="NCBI Taxonomy" id="559292"/>
    <lineage>
        <taxon>Eukaryota</taxon>
        <taxon>Fungi</taxon>
        <taxon>Dikarya</taxon>
        <taxon>Ascomycota</taxon>
        <taxon>Saccharomycotina</taxon>
        <taxon>Saccharomycetes</taxon>
        <taxon>Saccharomycetales</taxon>
        <taxon>Saccharomycetaceae</taxon>
        <taxon>Saccharomyces</taxon>
    </lineage>
</organism>
<dbReference type="EMBL" id="D28552">
    <property type="protein sequence ID" value="BAA05906.1"/>
    <property type="molecule type" value="Genomic_DNA"/>
</dbReference>
<dbReference type="EMBL" id="X59720">
    <property type="protein sequence ID" value="CAA42336.1"/>
    <property type="molecule type" value="Genomic_DNA"/>
</dbReference>
<dbReference type="EMBL" id="BK006937">
    <property type="protein sequence ID" value="DAA07478.1"/>
    <property type="molecule type" value="Genomic_DNA"/>
</dbReference>
<dbReference type="PIR" id="S50158">
    <property type="entry name" value="S50158"/>
</dbReference>
<dbReference type="RefSeq" id="NP_009925.1">
    <property type="nucleotide sequence ID" value="NM_001178651.1"/>
</dbReference>
<dbReference type="BioGRID" id="30977">
    <property type="interactions" value="236"/>
</dbReference>
<dbReference type="FunCoup" id="P25560">
    <property type="interactions" value="976"/>
</dbReference>
<dbReference type="IntAct" id="P25560">
    <property type="interactions" value="18"/>
</dbReference>
<dbReference type="STRING" id="4932.YCL001W"/>
<dbReference type="TCDB" id="9.B.82.1.1">
    <property type="family name" value="the endoplasmic reticulum retrieval protein1 (putative heavy metal transporter) (rer1) family"/>
</dbReference>
<dbReference type="iPTMnet" id="P25560"/>
<dbReference type="PaxDb" id="4932-YCL001W"/>
<dbReference type="PeptideAtlas" id="P25560"/>
<dbReference type="EnsemblFungi" id="YCL001W_mRNA">
    <property type="protein sequence ID" value="YCL001W"/>
    <property type="gene ID" value="YCL001W"/>
</dbReference>
<dbReference type="GeneID" id="850354"/>
<dbReference type="KEGG" id="sce:YCL001W"/>
<dbReference type="AGR" id="SGD:S000000507"/>
<dbReference type="SGD" id="S000000507">
    <property type="gene designation" value="RER1"/>
</dbReference>
<dbReference type="VEuPathDB" id="FungiDB:YCL001W"/>
<dbReference type="eggNOG" id="KOG1688">
    <property type="taxonomic scope" value="Eukaryota"/>
</dbReference>
<dbReference type="GeneTree" id="ENSGT00510000047137"/>
<dbReference type="HOGENOM" id="CLU_074889_0_0_1"/>
<dbReference type="InParanoid" id="P25560"/>
<dbReference type="OMA" id="GWYVVCY"/>
<dbReference type="OrthoDB" id="448250at2759"/>
<dbReference type="BioCyc" id="YEAST:G3O-29275-MONOMER"/>
<dbReference type="BioGRID-ORCS" id="850354">
    <property type="hits" value="0 hits in 10 CRISPR screens"/>
</dbReference>
<dbReference type="PRO" id="PR:P25560"/>
<dbReference type="Proteomes" id="UP000002311">
    <property type="component" value="Chromosome III"/>
</dbReference>
<dbReference type="RNAct" id="P25560">
    <property type="molecule type" value="protein"/>
</dbReference>
<dbReference type="GO" id="GO:0030137">
    <property type="term" value="C:COPI-coated vesicle"/>
    <property type="evidence" value="ECO:0000314"/>
    <property type="project" value="SGD"/>
</dbReference>
<dbReference type="GO" id="GO:0030134">
    <property type="term" value="C:COPII-coated ER to Golgi transport vesicle"/>
    <property type="evidence" value="ECO:0000314"/>
    <property type="project" value="SGD"/>
</dbReference>
<dbReference type="GO" id="GO:0005783">
    <property type="term" value="C:endoplasmic reticulum"/>
    <property type="evidence" value="ECO:0007669"/>
    <property type="project" value="GOC"/>
</dbReference>
<dbReference type="GO" id="GO:0000324">
    <property type="term" value="C:fungal-type vacuole"/>
    <property type="evidence" value="ECO:0000314"/>
    <property type="project" value="SGD"/>
</dbReference>
<dbReference type="GO" id="GO:0000139">
    <property type="term" value="C:Golgi membrane"/>
    <property type="evidence" value="ECO:0000318"/>
    <property type="project" value="GO_Central"/>
</dbReference>
<dbReference type="GO" id="GO:0006621">
    <property type="term" value="P:protein retention in ER lumen"/>
    <property type="evidence" value="ECO:0000315"/>
    <property type="project" value="SGD"/>
</dbReference>
<dbReference type="GO" id="GO:0006890">
    <property type="term" value="P:retrograde vesicle-mediated transport, Golgi to endoplasmic reticulum"/>
    <property type="evidence" value="ECO:0000314"/>
    <property type="project" value="SGD"/>
</dbReference>
<dbReference type="InterPro" id="IPR004932">
    <property type="entry name" value="Rer1"/>
</dbReference>
<dbReference type="PANTHER" id="PTHR10743">
    <property type="entry name" value="PROTEIN RER1"/>
    <property type="match status" value="1"/>
</dbReference>
<dbReference type="PANTHER" id="PTHR10743:SF0">
    <property type="entry name" value="PROTEIN RER1"/>
    <property type="match status" value="1"/>
</dbReference>
<dbReference type="Pfam" id="PF03248">
    <property type="entry name" value="Rer1"/>
    <property type="match status" value="1"/>
</dbReference>
<dbReference type="PIRSF" id="PIRSF016013">
    <property type="entry name" value="AtER_Rer1p"/>
    <property type="match status" value="1"/>
</dbReference>
<feature type="chain" id="PRO_0000207593" description="Protein RER1">
    <location>
        <begin position="1"/>
        <end position="188"/>
    </location>
</feature>
<feature type="topological domain" description="Cytoplasmic" evidence="1">
    <location>
        <begin position="1"/>
        <end position="61"/>
    </location>
</feature>
<feature type="transmembrane region" description="Helical" evidence="1">
    <location>
        <begin position="62"/>
        <end position="82"/>
    </location>
</feature>
<feature type="topological domain" description="Lumenal" evidence="1">
    <location>
        <begin position="83"/>
        <end position="138"/>
    </location>
</feature>
<feature type="transmembrane region" description="Helical" evidence="1">
    <location>
        <begin position="139"/>
        <end position="161"/>
    </location>
</feature>
<feature type="topological domain" description="Cytoplasmic" evidence="1">
    <location>
        <begin position="162"/>
        <end position="188"/>
    </location>
</feature>
<feature type="sequence conflict" description="In Ref. 2." evidence="4" ref="2">
    <original>RPFIRRLPEFKFWYNSI</original>
    <variation>LSIHQKTYQSSNSGITAF</variation>
    <location>
        <begin position="109"/>
        <end position="125"/>
    </location>
</feature>
<feature type="sequence conflict" description="In Ref. 2." evidence="4" ref="2">
    <original>L</original>
    <variation>V</variation>
    <location>
        <position position="136"/>
    </location>
</feature>
<feature type="sequence conflict" description="In Ref. 2." evidence="4" ref="2">
    <original>D</original>
    <variation>S</variation>
    <location>
        <position position="141"/>
    </location>
</feature>
<feature type="sequence conflict" description="In Ref. 2." evidence="4" ref="2">
    <original>FWPILLMYFILLFFLTMRRQIQHMIKYRYIPLDIGKKKYSHSSN</original>
    <variation>IFAHSLFDCYFHYYCFF</variation>
    <location>
        <begin position="145"/>
        <end position="188"/>
    </location>
</feature>
<reference key="1">
    <citation type="journal article" date="1995" name="Mol. Biol. Cell">
        <title>Membrane protein retrieval from the Golgi apparatus to the endoplasmic reticulum (ER): characterization of the RER1 gene product as a component involved in ER localization of Sec12p.</title>
        <authorList>
            <person name="Sato K."/>
            <person name="Nishikawa S."/>
            <person name="Nakano A."/>
        </authorList>
    </citation>
    <scope>NUCLEOTIDE SEQUENCE [GENOMIC DNA]</scope>
</reference>
<reference key="2">
    <citation type="journal article" date="1992" name="Nature">
        <title>The complete DNA sequence of yeast chromosome III.</title>
        <authorList>
            <person name="Oliver S.G."/>
            <person name="van der Aart Q.J.M."/>
            <person name="Agostoni-Carbone M.L."/>
            <person name="Aigle M."/>
            <person name="Alberghina L."/>
            <person name="Alexandraki D."/>
            <person name="Antoine G."/>
            <person name="Anwar R."/>
            <person name="Ballesta J.P.G."/>
            <person name="Benit P."/>
            <person name="Berben G."/>
            <person name="Bergantino E."/>
            <person name="Biteau N."/>
            <person name="Bolle P.-A."/>
            <person name="Bolotin-Fukuhara M."/>
            <person name="Brown A."/>
            <person name="Brown A.J.P."/>
            <person name="Buhler J.-M."/>
            <person name="Carcano C."/>
            <person name="Carignani G."/>
            <person name="Cederberg H."/>
            <person name="Chanet R."/>
            <person name="Contreras R."/>
            <person name="Crouzet M."/>
            <person name="Daignan-Fornier B."/>
            <person name="Defoor E."/>
            <person name="Delgado M.D."/>
            <person name="Demolder J."/>
            <person name="Doira C."/>
            <person name="Dubois E."/>
            <person name="Dujon B."/>
            <person name="Duesterhoeft A."/>
            <person name="Erdmann D."/>
            <person name="Esteban M."/>
            <person name="Fabre F."/>
            <person name="Fairhead C."/>
            <person name="Faye G."/>
            <person name="Feldmann H."/>
            <person name="Fiers W."/>
            <person name="Francingues-Gaillard M.-C."/>
            <person name="Franco L."/>
            <person name="Frontali L."/>
            <person name="Fukuhara H."/>
            <person name="Fuller L.J."/>
            <person name="Galland P."/>
            <person name="Gent M.E."/>
            <person name="Gigot D."/>
            <person name="Gilliquet V."/>
            <person name="Glansdorff N."/>
            <person name="Goffeau A."/>
            <person name="Grenson M."/>
            <person name="Grisanti P."/>
            <person name="Grivell L.A."/>
            <person name="de Haan M."/>
            <person name="Haasemann M."/>
            <person name="Hatat D."/>
            <person name="Hoenicka J."/>
            <person name="Hegemann J.H."/>
            <person name="Herbert C.J."/>
            <person name="Hilger F."/>
            <person name="Hohmann S."/>
            <person name="Hollenberg C.P."/>
            <person name="Huse K."/>
            <person name="Iborra F."/>
            <person name="Indge K.J."/>
            <person name="Isono K."/>
            <person name="Jacq C."/>
            <person name="Jacquet M."/>
            <person name="James C.M."/>
            <person name="Jauniaux J.-C."/>
            <person name="Jia Y."/>
            <person name="Jimenez A."/>
            <person name="Kelly A."/>
            <person name="Kleinhans U."/>
            <person name="Kreisl P."/>
            <person name="Lanfranchi G."/>
            <person name="Lewis C."/>
            <person name="van der Linden C.G."/>
            <person name="Lucchini G."/>
            <person name="Lutzenkirchen K."/>
            <person name="Maat M.J."/>
            <person name="Mallet L."/>
            <person name="Mannhaupt G."/>
            <person name="Martegani E."/>
            <person name="Mathieu A."/>
            <person name="Maurer C.T.C."/>
            <person name="McConnell D."/>
            <person name="McKee R.A."/>
            <person name="Messenguy F."/>
            <person name="Mewes H.-W."/>
            <person name="Molemans F."/>
            <person name="Montague M.A."/>
            <person name="Muzi Falconi M."/>
            <person name="Navas L."/>
            <person name="Newlon C.S."/>
            <person name="Noone D."/>
            <person name="Pallier C."/>
            <person name="Panzeri L."/>
            <person name="Pearson B.M."/>
            <person name="Perea J."/>
            <person name="Philippsen P."/>
            <person name="Pierard A."/>
            <person name="Planta R.J."/>
            <person name="Plevani P."/>
            <person name="Poetsch B."/>
            <person name="Pohl F.M."/>
            <person name="Purnelle B."/>
            <person name="Ramezani Rad M."/>
            <person name="Rasmussen S.W."/>
            <person name="Raynal A."/>
            <person name="Remacha M.A."/>
            <person name="Richterich P."/>
            <person name="Roberts A.B."/>
            <person name="Rodriguez F."/>
            <person name="Sanz E."/>
            <person name="Schaaff-Gerstenschlaeger I."/>
            <person name="Scherens B."/>
            <person name="Schweitzer B."/>
            <person name="Shu Y."/>
            <person name="Skala J."/>
            <person name="Slonimski P.P."/>
            <person name="Sor F."/>
            <person name="Soustelle C."/>
            <person name="Spiegelberg R."/>
            <person name="Stateva L.I."/>
            <person name="Steensma H.Y."/>
            <person name="Steiner S."/>
            <person name="Thierry A."/>
            <person name="Thireos G."/>
            <person name="Tzermia M."/>
            <person name="Urrestarazu L.A."/>
            <person name="Valle G."/>
            <person name="Vetter I."/>
            <person name="van Vliet-Reedijk J.C."/>
            <person name="Voet M."/>
            <person name="Volckaert G."/>
            <person name="Vreken P."/>
            <person name="Wang H."/>
            <person name="Warmington J.R."/>
            <person name="von Wettstein D."/>
            <person name="Wicksteed B.L."/>
            <person name="Wilson C."/>
            <person name="Wurst H."/>
            <person name="Xu G."/>
            <person name="Yoshikawa A."/>
            <person name="Zimmermann F.K."/>
            <person name="Sgouros J.G."/>
        </authorList>
    </citation>
    <scope>NUCLEOTIDE SEQUENCE [LARGE SCALE GENOMIC DNA]</scope>
    <source>
        <strain>ATCC 204508 / S288c</strain>
    </source>
</reference>
<reference key="3">
    <citation type="journal article" date="2014" name="G3 (Bethesda)">
        <title>The reference genome sequence of Saccharomyces cerevisiae: Then and now.</title>
        <authorList>
            <person name="Engel S.R."/>
            <person name="Dietrich F.S."/>
            <person name="Fisk D.G."/>
            <person name="Binkley G."/>
            <person name="Balakrishnan R."/>
            <person name="Costanzo M.C."/>
            <person name="Dwight S.S."/>
            <person name="Hitz B.C."/>
            <person name="Karra K."/>
            <person name="Nash R.S."/>
            <person name="Weng S."/>
            <person name="Wong E.D."/>
            <person name="Lloyd P."/>
            <person name="Skrzypek M.S."/>
            <person name="Miyasato S.R."/>
            <person name="Simison M."/>
            <person name="Cherry J.M."/>
        </authorList>
    </citation>
    <scope>GENOME REANNOTATION</scope>
    <source>
        <strain>ATCC 204508 / S288c</strain>
    </source>
</reference>
<reference key="4">
    <citation type="journal article" date="1993" name="Proc. Natl. Acad. Sci. U.S.A.">
        <title>Identification of a gene required for membrane protein retention in the early secretory pathway.</title>
        <authorList>
            <person name="Nishikawa S."/>
            <person name="Nakano A."/>
        </authorList>
    </citation>
    <scope>CHARACTERIZATION</scope>
</reference>
<reference key="5">
    <citation type="journal article" date="1997" name="Proc. Natl. Acad. Sci. U.S.A.">
        <title>Rer1p as common machinery for the endoplasmic reticulum localization of membrane proteins.</title>
        <authorList>
            <person name="Sato K."/>
            <person name="Sato M."/>
            <person name="Nakano A."/>
        </authorList>
    </citation>
    <scope>FUNCTION</scope>
</reference>
<reference key="6">
    <citation type="journal article" date="2003" name="Nature">
        <title>Global analysis of protein expression in yeast.</title>
        <authorList>
            <person name="Ghaemmaghami S."/>
            <person name="Huh W.-K."/>
            <person name="Bower K."/>
            <person name="Howson R.W."/>
            <person name="Belle A."/>
            <person name="Dephoure N."/>
            <person name="O'Shea E.K."/>
            <person name="Weissman J.S."/>
        </authorList>
    </citation>
    <scope>LEVEL OF PROTEIN EXPRESSION [LARGE SCALE ANALYSIS]</scope>
</reference>
<reference key="7">
    <citation type="journal article" date="2006" name="Proc. Natl. Acad. Sci. U.S.A.">
        <title>A global topology map of the Saccharomyces cerevisiae membrane proteome.</title>
        <authorList>
            <person name="Kim H."/>
            <person name="Melen K."/>
            <person name="Oesterberg M."/>
            <person name="von Heijne G."/>
        </authorList>
    </citation>
    <scope>TOPOLOGY [LARGE SCALE ANALYSIS]</scope>
    <source>
        <strain>ATCC 208353 / W303-1A</strain>
    </source>
</reference>
<gene>
    <name type="primary">RER1</name>
    <name type="ordered locus">YCL001W</name>
    <name type="ORF">YCL1W</name>
</gene>
<keyword id="KW-0333">Golgi apparatus</keyword>
<keyword id="KW-0472">Membrane</keyword>
<keyword id="KW-1185">Reference proteome</keyword>
<keyword id="KW-0812">Transmembrane</keyword>
<keyword id="KW-1133">Transmembrane helix</keyword>
<sequence>MDYDSSDTMNGGSSNPLITKMNTMKLLYQHYLDKVTPHAKERWAVLGGLLCLFMVRITMAEGWYVICYGLGLFLLNQFLAFLTPKFDMSLQQDEENNELEAGEKSEEFRPFIRRLPEFKFWYNSIRATVISLLLSLFSIFDIPVFWPILLMYFILLFFLTMRRQIQHMIKYRYIPLDIGKKKYSHSSN</sequence>
<name>RER1_YEAST</name>
<comment type="function">
    <text evidence="3">Involved in the retrieval of endoplasmic reticulum membrane proteins from the early Golgi compartment. Required for correct localization of SEC12, SEC71 and SEC63 in the endoplasmic reticulum.</text>
</comment>
<comment type="subcellular location">
    <subcellularLocation>
        <location>Golgi apparatus membrane</location>
        <topology>Multi-pass membrane protein</topology>
    </subcellularLocation>
</comment>
<comment type="miscellaneous">
    <text evidence="2">Present with 2840 molecules/cell in log phase SD medium.</text>
</comment>
<comment type="similarity">
    <text evidence="4">Belongs to the RER1 family.</text>
</comment>